<feature type="chain" id="PRO_0000343711" description="Zinc finger and BTB domain-containing protein 42">
    <location>
        <begin position="1"/>
        <end position="422"/>
    </location>
</feature>
<feature type="domain" description="BTB" evidence="2">
    <location>
        <begin position="24"/>
        <end position="92"/>
    </location>
</feature>
<feature type="zinc finger region" description="C2H2-type 1" evidence="3">
    <location>
        <begin position="294"/>
        <end position="316"/>
    </location>
</feature>
<feature type="zinc finger region" description="C2H2-type 2" evidence="3">
    <location>
        <begin position="334"/>
        <end position="356"/>
    </location>
</feature>
<feature type="zinc finger region" description="C2H2-type 3" evidence="3">
    <location>
        <begin position="362"/>
        <end position="384"/>
    </location>
</feature>
<feature type="zinc finger region" description="C2H2-type 4" evidence="3">
    <location>
        <begin position="390"/>
        <end position="413"/>
    </location>
</feature>
<feature type="region of interest" description="Disordered" evidence="4">
    <location>
        <begin position="121"/>
        <end position="141"/>
    </location>
</feature>
<feature type="region of interest" description="Disordered" evidence="4">
    <location>
        <begin position="166"/>
        <end position="188"/>
    </location>
</feature>
<feature type="region of interest" description="Disordered" evidence="4">
    <location>
        <begin position="207"/>
        <end position="256"/>
    </location>
</feature>
<feature type="compositionally biased region" description="Pro residues" evidence="4">
    <location>
        <begin position="243"/>
        <end position="252"/>
    </location>
</feature>
<feature type="sequence variant" id="VAR_073265" description="In LCCS6; loss of function mutation; dbSNP:rs730882163." evidence="6">
    <original>R</original>
    <variation>H</variation>
    <location>
        <position position="397"/>
    </location>
</feature>
<feature type="sequence conflict" description="In Ref. 2; AAI57834/AAI71822." evidence="7" ref="2">
    <original>E</original>
    <variation>K</variation>
    <location>
        <position position="232"/>
    </location>
</feature>
<gene>
    <name type="primary">ZBTB42</name>
</gene>
<evidence type="ECO:0000250" key="1">
    <source>
        <dbReference type="UniProtKB" id="Q811H0"/>
    </source>
</evidence>
<evidence type="ECO:0000255" key="2">
    <source>
        <dbReference type="PROSITE-ProRule" id="PRU00037"/>
    </source>
</evidence>
<evidence type="ECO:0000255" key="3">
    <source>
        <dbReference type="PROSITE-ProRule" id="PRU00042"/>
    </source>
</evidence>
<evidence type="ECO:0000256" key="4">
    <source>
        <dbReference type="SAM" id="MobiDB-lite"/>
    </source>
</evidence>
<evidence type="ECO:0000269" key="5">
    <source>
    </source>
</evidence>
<evidence type="ECO:0000269" key="6">
    <source>
    </source>
</evidence>
<evidence type="ECO:0000305" key="7"/>
<proteinExistence type="evidence at protein level"/>
<sequence length="422" mass="46491">MEFPEHGGRLLGRLRQQRELGFLCDCTVLVGDARFPAHRAVLAACSVYFHLFYRDRPAGSRDTVRLNGDIVTAPAFGRLLDFMYEGRLDLRSLPVEDVLAAASYLHMYDIVKVCKGRLQEKDRSLDPGNPAPGAEPAQPPCPWPVWTADLCPAARKAKLPPFGVKAALPPRASGPPPCQVPEESDQALDLSLKSGPRQERVHPPCVLQTPLCSQRQPGAQPLVKDERDSLSEQEESSSSRSPHSPPKPPPVPAAKGLVVGLQPLPLSGEGSRELELGAGRLASEDELGPGGPLCICPLCSKLFPSSHVLQLHLSAHFRERDSTRARLSPDGVAPTCPLCGKTFSCTYTLKRHERTHSGEKPYTCVQCGKSFQYSHNLSRHTVVHTREKPHACRWCERRFTQSGDLYRHVRKFHCGLVKSLLV</sequence>
<accession>B2RXF5</accession>
<accession>B7ZW21</accession>
<keyword id="KW-0963">Cytoplasm</keyword>
<keyword id="KW-0225">Disease variant</keyword>
<keyword id="KW-0238">DNA-binding</keyword>
<keyword id="KW-0479">Metal-binding</keyword>
<keyword id="KW-0539">Nucleus</keyword>
<keyword id="KW-1267">Proteomics identification</keyword>
<keyword id="KW-1185">Reference proteome</keyword>
<keyword id="KW-0677">Repeat</keyword>
<keyword id="KW-0678">Repressor</keyword>
<keyword id="KW-0804">Transcription</keyword>
<keyword id="KW-0805">Transcription regulation</keyword>
<keyword id="KW-0862">Zinc</keyword>
<keyword id="KW-0863">Zinc-finger</keyword>
<dbReference type="EMBL" id="AL590327">
    <property type="status" value="NOT_ANNOTATED_CDS"/>
    <property type="molecule type" value="Genomic_DNA"/>
</dbReference>
<dbReference type="EMBL" id="BC157833">
    <property type="protein sequence ID" value="AAI57834.1"/>
    <property type="molecule type" value="mRNA"/>
</dbReference>
<dbReference type="EMBL" id="BC171822">
    <property type="protein sequence ID" value="AAI71822.1"/>
    <property type="molecule type" value="mRNA"/>
</dbReference>
<dbReference type="CCDS" id="CCDS45174.1"/>
<dbReference type="RefSeq" id="NP_001131073.1">
    <property type="nucleotide sequence ID" value="NM_001137601.3"/>
</dbReference>
<dbReference type="RefSeq" id="NP_001357271.1">
    <property type="nucleotide sequence ID" value="NM_001370342.1"/>
</dbReference>
<dbReference type="RefSeq" id="XP_016876400.1">
    <property type="nucleotide sequence ID" value="XM_017020911.1"/>
</dbReference>
<dbReference type="SMR" id="B2RXF5"/>
<dbReference type="BioGRID" id="612563">
    <property type="interactions" value="67"/>
</dbReference>
<dbReference type="FunCoup" id="B2RXF5">
    <property type="interactions" value="230"/>
</dbReference>
<dbReference type="IntAct" id="B2RXF5">
    <property type="interactions" value="62"/>
</dbReference>
<dbReference type="STRING" id="9606.ENSP00000409107"/>
<dbReference type="GlyGen" id="B2RXF5">
    <property type="glycosylation" value="1 site"/>
</dbReference>
<dbReference type="iPTMnet" id="B2RXF5"/>
<dbReference type="PhosphoSitePlus" id="B2RXF5"/>
<dbReference type="BioMuta" id="ZBTB42"/>
<dbReference type="jPOST" id="B2RXF5"/>
<dbReference type="MassIVE" id="B2RXF5"/>
<dbReference type="PaxDb" id="9606-ENSP00000409107"/>
<dbReference type="PeptideAtlas" id="B2RXF5"/>
<dbReference type="ProteomicsDB" id="3461"/>
<dbReference type="Antibodypedia" id="58775">
    <property type="antibodies" value="64 antibodies from 10 providers"/>
</dbReference>
<dbReference type="DNASU" id="100128927"/>
<dbReference type="Ensembl" id="ENST00000342537.8">
    <property type="protein sequence ID" value="ENSP00000409107.2"/>
    <property type="gene ID" value="ENSG00000179627.10"/>
</dbReference>
<dbReference type="Ensembl" id="ENST00000555360.1">
    <property type="protein sequence ID" value="ENSP00000450673.1"/>
    <property type="gene ID" value="ENSG00000179627.10"/>
</dbReference>
<dbReference type="GeneID" id="100128927"/>
<dbReference type="KEGG" id="hsa:100128927"/>
<dbReference type="MANE-Select" id="ENST00000342537.8">
    <property type="protein sequence ID" value="ENSP00000409107.2"/>
    <property type="RefSeq nucleotide sequence ID" value="NM_001137601.3"/>
    <property type="RefSeq protein sequence ID" value="NP_001131073.1"/>
</dbReference>
<dbReference type="UCSC" id="uc001ypp.4">
    <property type="organism name" value="human"/>
</dbReference>
<dbReference type="AGR" id="HGNC:32550"/>
<dbReference type="CTD" id="100128927"/>
<dbReference type="DisGeNET" id="100128927"/>
<dbReference type="GeneCards" id="ZBTB42"/>
<dbReference type="HGNC" id="HGNC:32550">
    <property type="gene designation" value="ZBTB42"/>
</dbReference>
<dbReference type="HPA" id="ENSG00000179627">
    <property type="expression patterns" value="Low tissue specificity"/>
</dbReference>
<dbReference type="MalaCards" id="ZBTB42"/>
<dbReference type="MIM" id="613915">
    <property type="type" value="gene"/>
</dbReference>
<dbReference type="MIM" id="616248">
    <property type="type" value="phenotype"/>
</dbReference>
<dbReference type="neXtProt" id="NX_B2RXF5"/>
<dbReference type="OpenTargets" id="ENSG00000179627"/>
<dbReference type="PharmGKB" id="PA144596242"/>
<dbReference type="VEuPathDB" id="HostDB:ENSG00000179627"/>
<dbReference type="eggNOG" id="KOG1721">
    <property type="taxonomic scope" value="Eukaryota"/>
</dbReference>
<dbReference type="GeneTree" id="ENSGT00940000163959"/>
<dbReference type="HOGENOM" id="CLU_034521_0_0_1"/>
<dbReference type="InParanoid" id="B2RXF5"/>
<dbReference type="OMA" id="HPPCILQ"/>
<dbReference type="OrthoDB" id="4748970at2759"/>
<dbReference type="PAN-GO" id="B2RXF5">
    <property type="GO annotations" value="4 GO annotations based on evolutionary models"/>
</dbReference>
<dbReference type="PhylomeDB" id="B2RXF5"/>
<dbReference type="TreeFam" id="TF337437"/>
<dbReference type="PathwayCommons" id="B2RXF5"/>
<dbReference type="SignaLink" id="B2RXF5"/>
<dbReference type="BioGRID-ORCS" id="100128927">
    <property type="hits" value="14 hits in 1127 CRISPR screens"/>
</dbReference>
<dbReference type="ChiTaRS" id="ZBTB42">
    <property type="organism name" value="human"/>
</dbReference>
<dbReference type="GenomeRNAi" id="100128927"/>
<dbReference type="Pharos" id="B2RXF5">
    <property type="development level" value="Tbio"/>
</dbReference>
<dbReference type="PRO" id="PR:B2RXF5"/>
<dbReference type="Proteomes" id="UP000005640">
    <property type="component" value="Chromosome 14"/>
</dbReference>
<dbReference type="RNAct" id="B2RXF5">
    <property type="molecule type" value="protein"/>
</dbReference>
<dbReference type="Bgee" id="ENSG00000179627">
    <property type="expression patterns" value="Expressed in parotid gland and 110 other cell types or tissues"/>
</dbReference>
<dbReference type="GO" id="GO:0005737">
    <property type="term" value="C:cytoplasm"/>
    <property type="evidence" value="ECO:0007669"/>
    <property type="project" value="UniProtKB-SubCell"/>
</dbReference>
<dbReference type="GO" id="GO:0005654">
    <property type="term" value="C:nucleoplasm"/>
    <property type="evidence" value="ECO:0000314"/>
    <property type="project" value="HPA"/>
</dbReference>
<dbReference type="GO" id="GO:0005634">
    <property type="term" value="C:nucleus"/>
    <property type="evidence" value="ECO:0000314"/>
    <property type="project" value="UniProtKB"/>
</dbReference>
<dbReference type="GO" id="GO:0005886">
    <property type="term" value="C:plasma membrane"/>
    <property type="evidence" value="ECO:0000314"/>
    <property type="project" value="HPA"/>
</dbReference>
<dbReference type="GO" id="GO:0003677">
    <property type="term" value="F:DNA binding"/>
    <property type="evidence" value="ECO:0007669"/>
    <property type="project" value="UniProtKB-KW"/>
</dbReference>
<dbReference type="GO" id="GO:0000981">
    <property type="term" value="F:DNA-binding transcription factor activity, RNA polymerase II-specific"/>
    <property type="evidence" value="ECO:0000318"/>
    <property type="project" value="GO_Central"/>
</dbReference>
<dbReference type="GO" id="GO:0008270">
    <property type="term" value="F:zinc ion binding"/>
    <property type="evidence" value="ECO:0007669"/>
    <property type="project" value="UniProtKB-KW"/>
</dbReference>
<dbReference type="GO" id="GO:0007517">
    <property type="term" value="P:muscle organ development"/>
    <property type="evidence" value="ECO:0000315"/>
    <property type="project" value="UniProtKB"/>
</dbReference>
<dbReference type="GO" id="GO:0000122">
    <property type="term" value="P:negative regulation of transcription by RNA polymerase II"/>
    <property type="evidence" value="ECO:0007669"/>
    <property type="project" value="Ensembl"/>
</dbReference>
<dbReference type="GO" id="GO:0006357">
    <property type="term" value="P:regulation of transcription by RNA polymerase II"/>
    <property type="evidence" value="ECO:0000318"/>
    <property type="project" value="GO_Central"/>
</dbReference>
<dbReference type="CDD" id="cd18956">
    <property type="entry name" value="BTB_POZ_ZBTB42"/>
    <property type="match status" value="1"/>
</dbReference>
<dbReference type="FunFam" id="3.30.160.60:FF:000646">
    <property type="entry name" value="Myeloid zinc finger 1"/>
    <property type="match status" value="1"/>
</dbReference>
<dbReference type="FunFam" id="3.30.160.60:FF:000114">
    <property type="entry name" value="Zinc finger and BTB domain-containing protein 18"/>
    <property type="match status" value="1"/>
</dbReference>
<dbReference type="FunFam" id="3.30.710.10:FF:000021">
    <property type="entry name" value="Zinc finger and BTB domain-containing protein 18"/>
    <property type="match status" value="1"/>
</dbReference>
<dbReference type="FunFam" id="3.30.160.60:FF:000892">
    <property type="entry name" value="zinc finger and BTB domain-containing protein 3"/>
    <property type="match status" value="1"/>
</dbReference>
<dbReference type="Gene3D" id="3.30.160.60">
    <property type="entry name" value="Classic Zinc Finger"/>
    <property type="match status" value="3"/>
</dbReference>
<dbReference type="Gene3D" id="3.30.710.10">
    <property type="entry name" value="Potassium Channel Kv1.1, Chain A"/>
    <property type="match status" value="1"/>
</dbReference>
<dbReference type="InterPro" id="IPR000210">
    <property type="entry name" value="BTB/POZ_dom"/>
</dbReference>
<dbReference type="InterPro" id="IPR011333">
    <property type="entry name" value="SKP1/BTB/POZ_sf"/>
</dbReference>
<dbReference type="InterPro" id="IPR036236">
    <property type="entry name" value="Znf_C2H2_sf"/>
</dbReference>
<dbReference type="InterPro" id="IPR013087">
    <property type="entry name" value="Znf_C2H2_type"/>
</dbReference>
<dbReference type="PANTHER" id="PTHR24394:SF20">
    <property type="entry name" value="ZINC FINGER AND BTB DOMAIN-CONTAINING PROTEIN 42"/>
    <property type="match status" value="1"/>
</dbReference>
<dbReference type="PANTHER" id="PTHR24394">
    <property type="entry name" value="ZINC FINGER PROTEIN"/>
    <property type="match status" value="1"/>
</dbReference>
<dbReference type="Pfam" id="PF00651">
    <property type="entry name" value="BTB"/>
    <property type="match status" value="1"/>
</dbReference>
<dbReference type="Pfam" id="PF00096">
    <property type="entry name" value="zf-C2H2"/>
    <property type="match status" value="2"/>
</dbReference>
<dbReference type="Pfam" id="PF13894">
    <property type="entry name" value="zf-C2H2_4"/>
    <property type="match status" value="1"/>
</dbReference>
<dbReference type="SMART" id="SM00225">
    <property type="entry name" value="BTB"/>
    <property type="match status" value="1"/>
</dbReference>
<dbReference type="SMART" id="SM00355">
    <property type="entry name" value="ZnF_C2H2"/>
    <property type="match status" value="4"/>
</dbReference>
<dbReference type="SUPFAM" id="SSF57667">
    <property type="entry name" value="beta-beta-alpha zinc fingers"/>
    <property type="match status" value="2"/>
</dbReference>
<dbReference type="SUPFAM" id="SSF54695">
    <property type="entry name" value="POZ domain"/>
    <property type="match status" value="1"/>
</dbReference>
<dbReference type="PROSITE" id="PS50097">
    <property type="entry name" value="BTB"/>
    <property type="match status" value="1"/>
</dbReference>
<dbReference type="PROSITE" id="PS00028">
    <property type="entry name" value="ZINC_FINGER_C2H2_1"/>
    <property type="match status" value="4"/>
</dbReference>
<dbReference type="PROSITE" id="PS50157">
    <property type="entry name" value="ZINC_FINGER_C2H2_2"/>
    <property type="match status" value="4"/>
</dbReference>
<organism>
    <name type="scientific">Homo sapiens</name>
    <name type="common">Human</name>
    <dbReference type="NCBI Taxonomy" id="9606"/>
    <lineage>
        <taxon>Eukaryota</taxon>
        <taxon>Metazoa</taxon>
        <taxon>Chordata</taxon>
        <taxon>Craniata</taxon>
        <taxon>Vertebrata</taxon>
        <taxon>Euteleostomi</taxon>
        <taxon>Mammalia</taxon>
        <taxon>Eutheria</taxon>
        <taxon>Euarchontoglires</taxon>
        <taxon>Primates</taxon>
        <taxon>Haplorrhini</taxon>
        <taxon>Catarrhini</taxon>
        <taxon>Hominidae</taxon>
        <taxon>Homo</taxon>
    </lineage>
</organism>
<protein>
    <recommendedName>
        <fullName>Zinc finger and BTB domain-containing protein 42</fullName>
    </recommendedName>
</protein>
<reference key="1">
    <citation type="journal article" date="2003" name="Nature">
        <title>The DNA sequence and analysis of human chromosome 14.</title>
        <authorList>
            <person name="Heilig R."/>
            <person name="Eckenberg R."/>
            <person name="Petit J.-L."/>
            <person name="Fonknechten N."/>
            <person name="Da Silva C."/>
            <person name="Cattolico L."/>
            <person name="Levy M."/>
            <person name="Barbe V."/>
            <person name="De Berardinis V."/>
            <person name="Ureta-Vidal A."/>
            <person name="Pelletier E."/>
            <person name="Vico V."/>
            <person name="Anthouard V."/>
            <person name="Rowen L."/>
            <person name="Madan A."/>
            <person name="Qin S."/>
            <person name="Sun H."/>
            <person name="Du H."/>
            <person name="Pepin K."/>
            <person name="Artiguenave F."/>
            <person name="Robert C."/>
            <person name="Cruaud C."/>
            <person name="Bruels T."/>
            <person name="Jaillon O."/>
            <person name="Friedlander L."/>
            <person name="Samson G."/>
            <person name="Brottier P."/>
            <person name="Cure S."/>
            <person name="Segurens B."/>
            <person name="Aniere F."/>
            <person name="Samain S."/>
            <person name="Crespeau H."/>
            <person name="Abbasi N."/>
            <person name="Aiach N."/>
            <person name="Boscus D."/>
            <person name="Dickhoff R."/>
            <person name="Dors M."/>
            <person name="Dubois I."/>
            <person name="Friedman C."/>
            <person name="Gouyvenoux M."/>
            <person name="James R."/>
            <person name="Madan A."/>
            <person name="Mairey-Estrada B."/>
            <person name="Mangenot S."/>
            <person name="Martins N."/>
            <person name="Menard M."/>
            <person name="Oztas S."/>
            <person name="Ratcliffe A."/>
            <person name="Shaffer T."/>
            <person name="Trask B."/>
            <person name="Vacherie B."/>
            <person name="Bellemere C."/>
            <person name="Belser C."/>
            <person name="Besnard-Gonnet M."/>
            <person name="Bartol-Mavel D."/>
            <person name="Boutard M."/>
            <person name="Briez-Silla S."/>
            <person name="Combette S."/>
            <person name="Dufosse-Laurent V."/>
            <person name="Ferron C."/>
            <person name="Lechaplais C."/>
            <person name="Louesse C."/>
            <person name="Muselet D."/>
            <person name="Magdelenat G."/>
            <person name="Pateau E."/>
            <person name="Petit E."/>
            <person name="Sirvain-Trukniewicz P."/>
            <person name="Trybou A."/>
            <person name="Vega-Czarny N."/>
            <person name="Bataille E."/>
            <person name="Bluet E."/>
            <person name="Bordelais I."/>
            <person name="Dubois M."/>
            <person name="Dumont C."/>
            <person name="Guerin T."/>
            <person name="Haffray S."/>
            <person name="Hammadi R."/>
            <person name="Muanga J."/>
            <person name="Pellouin V."/>
            <person name="Robert D."/>
            <person name="Wunderle E."/>
            <person name="Gauguet G."/>
            <person name="Roy A."/>
            <person name="Sainte-Marthe L."/>
            <person name="Verdier J."/>
            <person name="Verdier-Discala C."/>
            <person name="Hillier L.W."/>
            <person name="Fulton L."/>
            <person name="McPherson J."/>
            <person name="Matsuda F."/>
            <person name="Wilson R."/>
            <person name="Scarpelli C."/>
            <person name="Gyapay G."/>
            <person name="Wincker P."/>
            <person name="Saurin W."/>
            <person name="Quetier F."/>
            <person name="Waterston R."/>
            <person name="Hood L."/>
            <person name="Weissenbach J."/>
        </authorList>
    </citation>
    <scope>NUCLEOTIDE SEQUENCE [LARGE SCALE GENOMIC DNA]</scope>
</reference>
<reference key="2">
    <citation type="journal article" date="2004" name="Genome Res.">
        <title>The status, quality, and expansion of the NIH full-length cDNA project: the Mammalian Gene Collection (MGC).</title>
        <authorList>
            <consortium name="The MGC Project Team"/>
        </authorList>
    </citation>
    <scope>NUCLEOTIDE SEQUENCE [LARGE SCALE MRNA]</scope>
    <source>
        <tissue>Brain</tissue>
        <tissue>Brain cortex</tissue>
    </source>
</reference>
<reference key="3">
    <citation type="journal article" date="2011" name="Hum. Genet.">
        <title>Characterization of the ZBTB42 gene in humans and mice.</title>
        <authorList>
            <person name="Devaney S.A."/>
            <person name="Mate S.E."/>
            <person name="Devaney J.M."/>
            <person name="Hoffman E.P."/>
        </authorList>
    </citation>
    <scope>SUBCELLULAR LOCATION</scope>
    <scope>TISSUE SPECIFICITY</scope>
</reference>
<reference key="4">
    <citation type="journal article" date="2014" name="Hum. Mol. Genet.">
        <title>ZBTB42 mutation defines a novel lethal congenital contracture syndrome (LCCS6).</title>
        <authorList>
            <person name="Patel N."/>
            <person name="Smith L.L."/>
            <person name="Faqeih E."/>
            <person name="Mohamed J."/>
            <person name="Gupta V.A."/>
            <person name="Alkuraya F.S."/>
        </authorList>
    </citation>
    <scope>INVOLVEMENT IN LCCS6</scope>
    <scope>VARIANT LCCS6 HIS-397</scope>
    <scope>CHARACTERIZATION OF VARIANT LCCS6 HIS-397</scope>
</reference>
<name>ZBT42_HUMAN</name>
<comment type="function">
    <text evidence="1">Transcriptional repressor. Specifically binds DNA and probably acts by recruiting chromatin remodeling multiprotein complexes.</text>
</comment>
<comment type="interaction">
    <interactant intactId="EBI-12287587">
        <id>B2RXF5</id>
    </interactant>
    <interactant intactId="EBI-8643161">
        <id>Q9NX04</id>
        <label>AIRIM</label>
    </interactant>
    <organismsDiffer>false</organismsDiffer>
    <experiments>3</experiments>
</comment>
<comment type="interaction">
    <interactant intactId="EBI-12287587">
        <id>B2RXF5</id>
    </interactant>
    <interactant intactId="EBI-11954519">
        <id>Q49AR9</id>
        <label>ANKS1A</label>
    </interactant>
    <organismsDiffer>false</organismsDiffer>
    <experiments>3</experiments>
</comment>
<comment type="interaction">
    <interactant intactId="EBI-12287587">
        <id>B2RXF5</id>
    </interactant>
    <interactant intactId="EBI-6425205">
        <id>Q9NWX5</id>
        <label>ASB6</label>
    </interactant>
    <organismsDiffer>false</organismsDiffer>
    <experiments>3</experiments>
</comment>
<comment type="interaction">
    <interactant intactId="EBI-12287587">
        <id>B2RXF5</id>
    </interactant>
    <interactant intactId="EBI-12006308">
        <id>Q7Z3C6-3</id>
        <label>ATG9A</label>
    </interactant>
    <organismsDiffer>false</organismsDiffer>
    <experiments>3</experiments>
</comment>
<comment type="interaction">
    <interactant intactId="EBI-12287587">
        <id>B2RXF5</id>
    </interactant>
    <interactant intactId="EBI-2105445">
        <id>P51451</id>
        <label>BLK</label>
    </interactant>
    <organismsDiffer>false</organismsDiffer>
    <experiments>3</experiments>
</comment>
<comment type="interaction">
    <interactant intactId="EBI-12287587">
        <id>B2RXF5</id>
    </interactant>
    <interactant intactId="EBI-10311131">
        <id>Q9NP86</id>
        <label>CABP5</label>
    </interactant>
    <organismsDiffer>false</organismsDiffer>
    <experiments>3</experiments>
</comment>
<comment type="interaction">
    <interactant intactId="EBI-12287587">
        <id>B2RXF5</id>
    </interactant>
    <interactant intactId="EBI-744545">
        <id>Q8NEC5</id>
        <label>CATSPER1</label>
    </interactant>
    <organismsDiffer>false</organismsDiffer>
    <experiments>3</experiments>
</comment>
<comment type="interaction">
    <interactant intactId="EBI-12287587">
        <id>B2RXF5</id>
    </interactant>
    <interactant intactId="EBI-10171570">
        <id>Q68D86</id>
        <label>CCDC102B</label>
    </interactant>
    <organismsDiffer>false</organismsDiffer>
    <experiments>3</experiments>
</comment>
<comment type="interaction">
    <interactant intactId="EBI-12287587">
        <id>B2RXF5</id>
    </interactant>
    <interactant intactId="EBI-11063830">
        <id>Q86X02</id>
        <label>CDR2L</label>
    </interactant>
    <organismsDiffer>false</organismsDiffer>
    <experiments>3</experiments>
</comment>
<comment type="interaction">
    <interactant intactId="EBI-12287587">
        <id>B2RXF5</id>
    </interactant>
    <interactant intactId="EBI-14151404">
        <id>Q96AQ7</id>
        <label>CIDEC</label>
    </interactant>
    <organismsDiffer>false</organismsDiffer>
    <experiments>3</experiments>
</comment>
<comment type="interaction">
    <interactant intactId="EBI-12287587">
        <id>B2RXF5</id>
    </interactant>
    <interactant intactId="EBI-739784">
        <id>Q9BW66</id>
        <label>CINP</label>
    </interactant>
    <organismsDiffer>false</organismsDiffer>
    <experiments>3</experiments>
</comment>
<comment type="interaction">
    <interactant intactId="EBI-12287587">
        <id>B2RXF5</id>
    </interactant>
    <interactant intactId="EBI-10192241">
        <id>O95833</id>
        <label>CLIC3</label>
    </interactant>
    <organismsDiffer>false</organismsDiffer>
    <experiments>3</experiments>
</comment>
<comment type="interaction">
    <interactant intactId="EBI-12287587">
        <id>B2RXF5</id>
    </interactant>
    <interactant intactId="EBI-2212355">
        <id>Q49AN0</id>
        <label>CRY2</label>
    </interactant>
    <organismsDiffer>false</organismsDiffer>
    <experiments>3</experiments>
</comment>
<comment type="interaction">
    <interactant intactId="EBI-12287587">
        <id>B2RXF5</id>
    </interactant>
    <interactant intactId="EBI-10171902">
        <id>P56545-3</id>
        <label>CTBP2</label>
    </interactant>
    <organismsDiffer>false</organismsDiffer>
    <experiments>3</experiments>
</comment>
<comment type="interaction">
    <interactant intactId="EBI-12287587">
        <id>B2RXF5</id>
    </interactant>
    <interactant intactId="EBI-11976595">
        <id>Q8IXW7</id>
        <label>FMR1</label>
    </interactant>
    <organismsDiffer>false</organismsDiffer>
    <experiments>6</experiments>
</comment>
<comment type="interaction">
    <interactant intactId="EBI-12287587">
        <id>B2RXF5</id>
    </interactant>
    <interactant intactId="EBI-744104">
        <id>P55040</id>
        <label>GEM</label>
    </interactant>
    <organismsDiffer>false</organismsDiffer>
    <experiments>3</experiments>
</comment>
<comment type="interaction">
    <interactant intactId="EBI-12287587">
        <id>B2RXF5</id>
    </interactant>
    <interactant intactId="EBI-618309">
        <id>Q08379</id>
        <label>GOLGA2</label>
    </interactant>
    <organismsDiffer>false</organismsDiffer>
    <experiments>3</experiments>
</comment>
<comment type="interaction">
    <interactant intactId="EBI-12287587">
        <id>B2RXF5</id>
    </interactant>
    <interactant intactId="EBI-11978177">
        <id>Q96NT3-2</id>
        <label>GUCD1</label>
    </interactant>
    <organismsDiffer>false</organismsDiffer>
    <experiments>3</experiments>
</comment>
<comment type="interaction">
    <interactant intactId="EBI-12287587">
        <id>B2RXF5</id>
    </interactant>
    <interactant intactId="EBI-3918847">
        <id>Q9H2F3</id>
        <label>HSD3B7</label>
    </interactant>
    <organismsDiffer>false</organismsDiffer>
    <experiments>3</experiments>
</comment>
<comment type="interaction">
    <interactant intactId="EBI-12287587">
        <id>B2RXF5</id>
    </interactant>
    <interactant intactId="EBI-7116203">
        <id>O75031</id>
        <label>HSF2BP</label>
    </interactant>
    <organismsDiffer>false</organismsDiffer>
    <experiments>3</experiments>
</comment>
<comment type="interaction">
    <interactant intactId="EBI-12287587">
        <id>B2RXF5</id>
    </interactant>
    <interactant intactId="EBI-2556193">
        <id>Q63ZY3</id>
        <label>KANK2</label>
    </interactant>
    <organismsDiffer>false</organismsDiffer>
    <experiments>3</experiments>
</comment>
<comment type="interaction">
    <interactant intactId="EBI-12287587">
        <id>B2RXF5</id>
    </interactant>
    <interactant intactId="EBI-4397613">
        <id>Q7L273</id>
        <label>KCTD9</label>
    </interactant>
    <organismsDiffer>false</organismsDiffer>
    <experiments>3</experiments>
</comment>
<comment type="interaction">
    <interactant intactId="EBI-12287587">
        <id>B2RXF5</id>
    </interactant>
    <interactant intactId="EBI-10171697">
        <id>Q6A162</id>
        <label>KRT40</label>
    </interactant>
    <organismsDiffer>false</organismsDiffer>
    <experiments>3</experiments>
</comment>
<comment type="interaction">
    <interactant intactId="EBI-12287587">
        <id>B2RXF5</id>
    </interactant>
    <interactant intactId="EBI-746778">
        <id>Q96A72</id>
        <label>MAGOHB</label>
    </interactant>
    <organismsDiffer>false</organismsDiffer>
    <experiments>3</experiments>
</comment>
<comment type="interaction">
    <interactant intactId="EBI-12287587">
        <id>B2RXF5</id>
    </interactant>
    <interactant intactId="EBI-959949">
        <id>P28482</id>
        <label>MAPK1</label>
    </interactant>
    <organismsDiffer>false</organismsDiffer>
    <experiments>3</experiments>
</comment>
<comment type="interaction">
    <interactant intactId="EBI-12287587">
        <id>B2RXF5</id>
    </interactant>
    <interactant intactId="EBI-724076">
        <id>Q99750</id>
        <label>MDFI</label>
    </interactant>
    <organismsDiffer>false</organismsDiffer>
    <experiments>3</experiments>
</comment>
<comment type="interaction">
    <interactant intactId="EBI-12287587">
        <id>B2RXF5</id>
    </interactant>
    <interactant intactId="EBI-10172526">
        <id>Q9UJV3-2</id>
        <label>MID2</label>
    </interactant>
    <organismsDiffer>false</organismsDiffer>
    <experiments>3</experiments>
</comment>
<comment type="interaction">
    <interactant intactId="EBI-12287587">
        <id>B2RXF5</id>
    </interactant>
    <interactant intactId="EBI-2340269">
        <id>Q13064</id>
        <label>MKRN3</label>
    </interactant>
    <organismsDiffer>false</organismsDiffer>
    <experiments>3</experiments>
</comment>
<comment type="interaction">
    <interactant intactId="EBI-12287587">
        <id>B2RXF5</id>
    </interactant>
    <interactant intactId="EBI-6952711">
        <id>Q8WY64</id>
        <label>MYLIP</label>
    </interactant>
    <organismsDiffer>false</organismsDiffer>
    <experiments>3</experiments>
</comment>
<comment type="interaction">
    <interactant intactId="EBI-12287587">
        <id>B2RXF5</id>
    </interactant>
    <interactant intactId="EBI-713635">
        <id>O43639</id>
        <label>NCK2</label>
    </interactant>
    <organismsDiffer>false</organismsDiffer>
    <experiments>3</experiments>
</comment>
<comment type="interaction">
    <interactant intactId="EBI-12287587">
        <id>B2RXF5</id>
    </interactant>
    <interactant intactId="EBI-10249760">
        <id>Q9UHB4</id>
        <label>NDOR1</label>
    </interactant>
    <organismsDiffer>false</organismsDiffer>
    <experiments>5</experiments>
</comment>
<comment type="interaction">
    <interactant intactId="EBI-12287587">
        <id>B2RXF5</id>
    </interactant>
    <interactant intactId="EBI-395927">
        <id>Q9BVI4</id>
        <label>NOC4L</label>
    </interactant>
    <organismsDiffer>false</organismsDiffer>
    <experiments>3</experiments>
</comment>
<comment type="interaction">
    <interactant intactId="EBI-12287587">
        <id>B2RXF5</id>
    </interactant>
    <interactant intactId="EBI-12049527">
        <id>Q9UMX2-2</id>
        <label>OAZ3</label>
    </interactant>
    <organismsDiffer>false</organismsDiffer>
    <experiments>3</experiments>
</comment>
<comment type="interaction">
    <interactant intactId="EBI-12287587">
        <id>B2RXF5</id>
    </interactant>
    <interactant intactId="EBI-9057006">
        <id>Q9UJX0</id>
        <label>OSGIN1</label>
    </interactant>
    <organismsDiffer>false</organismsDiffer>
    <experiments>3</experiments>
</comment>
<comment type="interaction">
    <interactant intactId="EBI-12287587">
        <id>B2RXF5</id>
    </interactant>
    <interactant intactId="EBI-740446">
        <id>P32242</id>
        <label>OTX1</label>
    </interactant>
    <organismsDiffer>false</organismsDiffer>
    <experiments>3</experiments>
</comment>
<comment type="interaction">
    <interactant intactId="EBI-12287587">
        <id>B2RXF5</id>
    </interactant>
    <interactant intactId="EBI-714158">
        <id>Q13526</id>
        <label>PIN1</label>
    </interactant>
    <organismsDiffer>false</organismsDiffer>
    <experiments>3</experiments>
</comment>
<comment type="interaction">
    <interactant intactId="EBI-12287587">
        <id>B2RXF5</id>
    </interactant>
    <interactant intactId="EBI-12089905">
        <id>O60733</id>
        <label>PLA2G6</label>
    </interactant>
    <organismsDiffer>false</organismsDiffer>
    <experiments>3</experiments>
</comment>
<comment type="interaction">
    <interactant intactId="EBI-12287587">
        <id>B2RXF5</id>
    </interactant>
    <interactant intactId="EBI-1055079">
        <id>O15160</id>
        <label>POLR1C</label>
    </interactant>
    <organismsDiffer>false</organismsDiffer>
    <experiments>3</experiments>
</comment>
<comment type="interaction">
    <interactant intactId="EBI-12287587">
        <id>B2RXF5</id>
    </interactant>
    <interactant intactId="EBI-1055693">
        <id>O75771</id>
        <label>RAD51D</label>
    </interactant>
    <organismsDiffer>false</organismsDiffer>
    <experiments>3</experiments>
</comment>
<comment type="interaction">
    <interactant intactId="EBI-12287587">
        <id>B2RXF5</id>
    </interactant>
    <interactant intactId="EBI-298169">
        <id>Q96RF0</id>
        <label>SNX18</label>
    </interactant>
    <organismsDiffer>false</organismsDiffer>
    <experiments>3</experiments>
</comment>
<comment type="interaction">
    <interactant intactId="EBI-12287587">
        <id>B2RXF5</id>
    </interactant>
    <interactant intactId="EBI-742688">
        <id>Q9NZD8</id>
        <label>SPG21</label>
    </interactant>
    <organismsDiffer>false</organismsDiffer>
    <experiments>3</experiments>
</comment>
<comment type="interaction">
    <interactant intactId="EBI-12287587">
        <id>B2RXF5</id>
    </interactant>
    <interactant intactId="EBI-11119202">
        <id>Q9UL33-2</id>
        <label>TRAPPC2L</label>
    </interactant>
    <organismsDiffer>false</organismsDiffer>
    <experiments>3</experiments>
</comment>
<comment type="interaction">
    <interactant intactId="EBI-12287587">
        <id>B2RXF5</id>
    </interactant>
    <interactant intactId="EBI-2130449">
        <id>Q6AZZ1</id>
        <label>TRIM68</label>
    </interactant>
    <organismsDiffer>false</organismsDiffer>
    <experiments>3</experiments>
</comment>
<comment type="interaction">
    <interactant intactId="EBI-12287587">
        <id>B2RXF5</id>
    </interactant>
    <interactant intactId="EBI-9090990">
        <id>Q5W5X9-3</id>
        <label>TTC23</label>
    </interactant>
    <organismsDiffer>false</organismsDiffer>
    <experiments>3</experiments>
</comment>
<comment type="interaction">
    <interactant intactId="EBI-12287587">
        <id>B2RXF5</id>
    </interactant>
    <interactant intactId="EBI-7353612">
        <id>P57075-2</id>
        <label>UBASH3A</label>
    </interactant>
    <organismsDiffer>false</organismsDiffer>
    <experiments>3</experiments>
</comment>
<comment type="interaction">
    <interactant intactId="EBI-12287587">
        <id>B2RXF5</id>
    </interactant>
    <interactant intactId="EBI-739895">
        <id>Q8N6Y0</id>
        <label>USHBP1</label>
    </interactant>
    <organismsDiffer>false</organismsDiffer>
    <experiments>3</experiments>
</comment>
<comment type="interaction">
    <interactant intactId="EBI-12287587">
        <id>B2RXF5</id>
    </interactant>
    <interactant intactId="EBI-711925">
        <id>Q05516</id>
        <label>ZBTB16</label>
    </interactant>
    <organismsDiffer>false</organismsDiffer>
    <experiments>3</experiments>
</comment>
<comment type="interaction">
    <interactant intactId="EBI-12287587">
        <id>B2RXF5</id>
    </interactant>
    <interactant intactId="EBI-11522250">
        <id>O15156-2</id>
        <label>ZBTB7B</label>
    </interactant>
    <organismsDiffer>false</organismsDiffer>
    <experiments>3</experiments>
</comment>
<comment type="interaction">
    <interactant intactId="EBI-12287587">
        <id>B2RXF5</id>
    </interactant>
    <interactant intactId="EBI-373456">
        <id>Q9Y3S2</id>
        <label>ZNF330</label>
    </interactant>
    <organismsDiffer>false</organismsDiffer>
    <experiments>3</experiments>
</comment>
<comment type="subcellular location">
    <subcellularLocation>
        <location evidence="1">Cytoplasm</location>
    </subcellularLocation>
    <subcellularLocation>
        <location evidence="5">Nucleus</location>
    </subcellularLocation>
    <subcellularLocation>
        <location evidence="1">Nucleus</location>
        <location evidence="1">Nucleoplasm</location>
    </subcellularLocation>
    <text evidence="1">In skeletal myofibers, highly enriched in subsynaptic nuclei at the neuromuscular junctions.</text>
</comment>
<comment type="tissue specificity">
    <text evidence="5">Expressed in skeletal muscle (at protein level).</text>
</comment>
<comment type="disease" evidence="6">
    <disease id="DI-04327">
        <name>Lethal congenital contracture syndrome 6</name>
        <acronym>LCCS6</acronym>
        <description>A form of lethal congenital contracture syndrome, an autosomal recessive disorder characterized by degeneration of anterior horn neurons, extreme skeletal muscle atrophy and congenital non-progressive joint contractures. The contractures can involve the upper or lower limbs and/or the vertebral column, leading to various degrees of flexion or extension limitations evident at birth. LCCS6 features include severe polyhydramnios and absent stomach, in addition to multiple contracture deformities.</description>
        <dbReference type="MIM" id="616248"/>
    </disease>
    <text>The disease is caused by variants affecting the gene represented in this entry.</text>
</comment>
<comment type="similarity">
    <text evidence="7">Belongs to the krueppel C2H2-type zinc-finger protein family. ZBTB18 subfamily.</text>
</comment>